<comment type="function">
    <text evidence="2">Cell wall formation.</text>
</comment>
<comment type="catalytic activity">
    <reaction evidence="2">
        <text>2 D-alanine + ATP = D-alanyl-D-alanine + ADP + phosphate + H(+)</text>
        <dbReference type="Rhea" id="RHEA:11224"/>
        <dbReference type="ChEBI" id="CHEBI:15378"/>
        <dbReference type="ChEBI" id="CHEBI:30616"/>
        <dbReference type="ChEBI" id="CHEBI:43474"/>
        <dbReference type="ChEBI" id="CHEBI:57416"/>
        <dbReference type="ChEBI" id="CHEBI:57822"/>
        <dbReference type="ChEBI" id="CHEBI:456216"/>
        <dbReference type="EC" id="6.3.2.4"/>
    </reaction>
</comment>
<comment type="cofactor">
    <cofactor evidence="1">
        <name>Mg(2+)</name>
        <dbReference type="ChEBI" id="CHEBI:18420"/>
    </cofactor>
    <cofactor evidence="1">
        <name>Mn(2+)</name>
        <dbReference type="ChEBI" id="CHEBI:29035"/>
    </cofactor>
    <text evidence="1">Binds 2 magnesium or manganese ions per subunit.</text>
</comment>
<comment type="pathway">
    <text evidence="2">Cell wall biogenesis; peptidoglycan biosynthesis.</text>
</comment>
<comment type="subcellular location">
    <subcellularLocation>
        <location evidence="2">Cytoplasm</location>
    </subcellularLocation>
</comment>
<comment type="similarity">
    <text evidence="2">Belongs to the D-alanine--D-alanine ligase family.</text>
</comment>
<accession>Q1LT82</accession>
<proteinExistence type="inferred from homology"/>
<protein>
    <recommendedName>
        <fullName evidence="2">D-alanine--D-alanine ligase</fullName>
        <ecNumber evidence="2">6.3.2.4</ecNumber>
    </recommendedName>
    <alternativeName>
        <fullName evidence="2">D-Ala-D-Ala ligase</fullName>
    </alternativeName>
    <alternativeName>
        <fullName evidence="2">D-alanylalanine synthetase</fullName>
    </alternativeName>
</protein>
<gene>
    <name evidence="2" type="primary">ddl</name>
    <name type="ordered locus">BCI_0388</name>
</gene>
<keyword id="KW-0067">ATP-binding</keyword>
<keyword id="KW-0133">Cell shape</keyword>
<keyword id="KW-0961">Cell wall biogenesis/degradation</keyword>
<keyword id="KW-0963">Cytoplasm</keyword>
<keyword id="KW-0436">Ligase</keyword>
<keyword id="KW-0460">Magnesium</keyword>
<keyword id="KW-0464">Manganese</keyword>
<keyword id="KW-0479">Metal-binding</keyword>
<keyword id="KW-0547">Nucleotide-binding</keyword>
<keyword id="KW-0573">Peptidoglycan synthesis</keyword>
<keyword id="KW-1185">Reference proteome</keyword>
<evidence type="ECO:0000250" key="1"/>
<evidence type="ECO:0000255" key="2">
    <source>
        <dbReference type="HAMAP-Rule" id="MF_00047"/>
    </source>
</evidence>
<dbReference type="EC" id="6.3.2.4" evidence="2"/>
<dbReference type="EMBL" id="CP000238">
    <property type="protein sequence ID" value="ABF14027.1"/>
    <property type="molecule type" value="Genomic_DNA"/>
</dbReference>
<dbReference type="RefSeq" id="WP_011520565.1">
    <property type="nucleotide sequence ID" value="NC_007984.1"/>
</dbReference>
<dbReference type="SMR" id="Q1LT82"/>
<dbReference type="STRING" id="374463.BCI_0388"/>
<dbReference type="KEGG" id="bci:BCI_0388"/>
<dbReference type="HOGENOM" id="CLU_039268_0_1_6"/>
<dbReference type="OrthoDB" id="9813261at2"/>
<dbReference type="UniPathway" id="UPA00219"/>
<dbReference type="Proteomes" id="UP000002427">
    <property type="component" value="Chromosome"/>
</dbReference>
<dbReference type="GO" id="GO:0005829">
    <property type="term" value="C:cytosol"/>
    <property type="evidence" value="ECO:0007669"/>
    <property type="project" value="TreeGrafter"/>
</dbReference>
<dbReference type="GO" id="GO:0005524">
    <property type="term" value="F:ATP binding"/>
    <property type="evidence" value="ECO:0007669"/>
    <property type="project" value="UniProtKB-KW"/>
</dbReference>
<dbReference type="GO" id="GO:0008716">
    <property type="term" value="F:D-alanine-D-alanine ligase activity"/>
    <property type="evidence" value="ECO:0007669"/>
    <property type="project" value="UniProtKB-UniRule"/>
</dbReference>
<dbReference type="GO" id="GO:0046872">
    <property type="term" value="F:metal ion binding"/>
    <property type="evidence" value="ECO:0007669"/>
    <property type="project" value="UniProtKB-KW"/>
</dbReference>
<dbReference type="GO" id="GO:0071555">
    <property type="term" value="P:cell wall organization"/>
    <property type="evidence" value="ECO:0007669"/>
    <property type="project" value="UniProtKB-KW"/>
</dbReference>
<dbReference type="GO" id="GO:0009252">
    <property type="term" value="P:peptidoglycan biosynthetic process"/>
    <property type="evidence" value="ECO:0007669"/>
    <property type="project" value="UniProtKB-UniRule"/>
</dbReference>
<dbReference type="GO" id="GO:0008360">
    <property type="term" value="P:regulation of cell shape"/>
    <property type="evidence" value="ECO:0007669"/>
    <property type="project" value="UniProtKB-KW"/>
</dbReference>
<dbReference type="FunFam" id="3.30.470.20:FF:000008">
    <property type="entry name" value="D-alanine--D-alanine ligase"/>
    <property type="match status" value="1"/>
</dbReference>
<dbReference type="Gene3D" id="3.40.50.20">
    <property type="match status" value="1"/>
</dbReference>
<dbReference type="Gene3D" id="3.30.1490.20">
    <property type="entry name" value="ATP-grasp fold, A domain"/>
    <property type="match status" value="1"/>
</dbReference>
<dbReference type="Gene3D" id="3.30.470.20">
    <property type="entry name" value="ATP-grasp fold, B domain"/>
    <property type="match status" value="1"/>
</dbReference>
<dbReference type="HAMAP" id="MF_00047">
    <property type="entry name" value="Dala_Dala_lig"/>
    <property type="match status" value="1"/>
</dbReference>
<dbReference type="InterPro" id="IPR011761">
    <property type="entry name" value="ATP-grasp"/>
</dbReference>
<dbReference type="InterPro" id="IPR013815">
    <property type="entry name" value="ATP_grasp_subdomain_1"/>
</dbReference>
<dbReference type="InterPro" id="IPR000291">
    <property type="entry name" value="D-Ala_lig_Van_CS"/>
</dbReference>
<dbReference type="InterPro" id="IPR005905">
    <property type="entry name" value="D_ala_D_ala"/>
</dbReference>
<dbReference type="InterPro" id="IPR011095">
    <property type="entry name" value="Dala_Dala_lig_C"/>
</dbReference>
<dbReference type="InterPro" id="IPR011127">
    <property type="entry name" value="Dala_Dala_lig_N"/>
</dbReference>
<dbReference type="InterPro" id="IPR016185">
    <property type="entry name" value="PreATP-grasp_dom_sf"/>
</dbReference>
<dbReference type="NCBIfam" id="TIGR01205">
    <property type="entry name" value="D_ala_D_alaTIGR"/>
    <property type="match status" value="1"/>
</dbReference>
<dbReference type="NCBIfam" id="NF002378">
    <property type="entry name" value="PRK01372.1"/>
    <property type="match status" value="1"/>
</dbReference>
<dbReference type="NCBIfam" id="NF002525">
    <property type="entry name" value="PRK01966.1-1"/>
    <property type="match status" value="1"/>
</dbReference>
<dbReference type="NCBIfam" id="NF002528">
    <property type="entry name" value="PRK01966.1-4"/>
    <property type="match status" value="1"/>
</dbReference>
<dbReference type="PANTHER" id="PTHR23132">
    <property type="entry name" value="D-ALANINE--D-ALANINE LIGASE"/>
    <property type="match status" value="1"/>
</dbReference>
<dbReference type="PANTHER" id="PTHR23132:SF25">
    <property type="entry name" value="D-ALANINE--D-ALANINE LIGASE A"/>
    <property type="match status" value="1"/>
</dbReference>
<dbReference type="Pfam" id="PF07478">
    <property type="entry name" value="Dala_Dala_lig_C"/>
    <property type="match status" value="1"/>
</dbReference>
<dbReference type="Pfam" id="PF01820">
    <property type="entry name" value="Dala_Dala_lig_N"/>
    <property type="match status" value="1"/>
</dbReference>
<dbReference type="PIRSF" id="PIRSF039102">
    <property type="entry name" value="Ddl/VanB"/>
    <property type="match status" value="1"/>
</dbReference>
<dbReference type="SUPFAM" id="SSF56059">
    <property type="entry name" value="Glutathione synthetase ATP-binding domain-like"/>
    <property type="match status" value="1"/>
</dbReference>
<dbReference type="SUPFAM" id="SSF52440">
    <property type="entry name" value="PreATP-grasp domain"/>
    <property type="match status" value="1"/>
</dbReference>
<dbReference type="PROSITE" id="PS50975">
    <property type="entry name" value="ATP_GRASP"/>
    <property type="match status" value="1"/>
</dbReference>
<dbReference type="PROSITE" id="PS00843">
    <property type="entry name" value="DALA_DALA_LIGASE_1"/>
    <property type="match status" value="1"/>
</dbReference>
<dbReference type="PROSITE" id="PS00844">
    <property type="entry name" value="DALA_DALA_LIGASE_2"/>
    <property type="match status" value="1"/>
</dbReference>
<name>DDL_BAUCH</name>
<reference key="1">
    <citation type="journal article" date="2006" name="PLoS Biol.">
        <title>Metabolic complementarity and genomics of the dual bacterial symbiosis of sharpshooters.</title>
        <authorList>
            <person name="Wu D."/>
            <person name="Daugherty S.C."/>
            <person name="Van Aken S.E."/>
            <person name="Pai G.H."/>
            <person name="Watkins K.L."/>
            <person name="Khouri H."/>
            <person name="Tallon L.J."/>
            <person name="Zaborsky J.M."/>
            <person name="Dunbar H.E."/>
            <person name="Tran P.L."/>
            <person name="Moran N.A."/>
            <person name="Eisen J.A."/>
        </authorList>
    </citation>
    <scope>NUCLEOTIDE SEQUENCE [LARGE SCALE GENOMIC DNA]</scope>
</reference>
<organism>
    <name type="scientific">Baumannia cicadellinicola subsp. Homalodisca coagulata</name>
    <dbReference type="NCBI Taxonomy" id="374463"/>
    <lineage>
        <taxon>Bacteria</taxon>
        <taxon>Pseudomonadati</taxon>
        <taxon>Pseudomonadota</taxon>
        <taxon>Gammaproteobacteria</taxon>
        <taxon>Candidatus Palibaumannia</taxon>
    </lineage>
</organism>
<feature type="chain" id="PRO_1000030431" description="D-alanine--D-alanine ligase">
    <location>
        <begin position="1"/>
        <end position="375"/>
    </location>
</feature>
<feature type="domain" description="ATP-grasp" evidence="2">
    <location>
        <begin position="145"/>
        <end position="348"/>
    </location>
</feature>
<feature type="binding site" evidence="2">
    <location>
        <begin position="175"/>
        <end position="230"/>
    </location>
    <ligand>
        <name>ATP</name>
        <dbReference type="ChEBI" id="CHEBI:30616"/>
    </ligand>
</feature>
<feature type="binding site" evidence="2">
    <location>
        <position position="302"/>
    </location>
    <ligand>
        <name>Mg(2+)</name>
        <dbReference type="ChEBI" id="CHEBI:18420"/>
        <label>1</label>
    </ligand>
</feature>
<feature type="binding site" evidence="2">
    <location>
        <position position="315"/>
    </location>
    <ligand>
        <name>Mg(2+)</name>
        <dbReference type="ChEBI" id="CHEBI:18420"/>
        <label>1</label>
    </ligand>
</feature>
<feature type="binding site" evidence="2">
    <location>
        <position position="315"/>
    </location>
    <ligand>
        <name>Mg(2+)</name>
        <dbReference type="ChEBI" id="CHEBI:18420"/>
        <label>2</label>
    </ligand>
</feature>
<feature type="binding site" evidence="2">
    <location>
        <position position="317"/>
    </location>
    <ligand>
        <name>Mg(2+)</name>
        <dbReference type="ChEBI" id="CHEBI:18420"/>
        <label>2</label>
    </ligand>
</feature>
<sequence length="375" mass="41589">MAKLRVGIIFGGQSAEHEVSLQSAKNIVETIDENKFEVVLFGIDKEGQWHINNKLNYLIYGENETYIALNKSNKHIAIIPGRKHDQFIQIDMLEQLVQLDVIFPIVHGTLGEDGNLQGLLRMANLPFVGSTVLGSAVSMDKDIAKRLLRDADLEVTPSITLTRINRENFSYDQIITYLGSSLFVKPANQGSSVGVSKVINRISFDQALALAFCFDDKVLVESAINGRELECAVLGNHDPQASLCGEIVLSDNFYSYEKKYLNEHGAVVVVPAAISKEVSNNIQKIAVRAFQALNCTGMARVDVFLTTNNKVLVNEVNTSPGFTSISMYPKLWQASGISYPALITRLIELAIERYYAEQKKISHRDIYNKIDTGSA</sequence>